<protein>
    <recommendedName>
        <fullName evidence="1">Methionine--tRNA ligase</fullName>
        <ecNumber evidence="1">6.1.1.10</ecNumber>
    </recommendedName>
    <alternativeName>
        <fullName evidence="1">Methionyl-tRNA synthetase</fullName>
        <shortName evidence="1">MetRS</shortName>
    </alternativeName>
</protein>
<sequence length="595" mass="66251">MSRVLSAVAWPYANGPRHIGHVAGFGVPSDVFSRYMRMAGHDVLMVSGSDEHGTPILIAADEAGLSPQELADRNHRIIAEDLASLGLTYDLYTRTTTRNHHAVVQELFLGVYENGYFVEQTTYGAISPSTGRTLPDRYIEGTCPICGYDGARGDQCDNCGNQLDPHDLIDPRSKINGETPEFIETQHFFLDLPALAEALGEWLDGREATGLWRPNVIRFSQNILKEIRPRAMTRDIDWGIAVPLDGWRENPTKRLYVWFDAVIGYLSASIEWARRLDEPDRWRDWWNDPDALSYYFMGKDNITFHSQIWPAELLAYSGKGAKGGTPRQYGELNLPTEVVSSEFLTMEGRKFSSSKRVVIYVRDLLSRYQPDAFRYFVAAAGPENQDSDFTWSEFVRRTNDELVAGWGNLVNRTANLIAKNFGEIPKAGELTAADQALLDSVASAFGVVGDLIGRHRQKQAIGEAMRAVAEVNKYVSDTEPWKIKDDPDRLGTILHVVAQCVADLNLILSPFLPFAANEVDRALGGSGEIAPMPRLEEVDDLDGGAPYPIITGEYSGFPAWERRPIVPGTPVSKPTPIFTKLDPSIVDEELARLES</sequence>
<organism>
    <name type="scientific">Nocardioides sp. (strain ATCC BAA-499 / JS614)</name>
    <dbReference type="NCBI Taxonomy" id="196162"/>
    <lineage>
        <taxon>Bacteria</taxon>
        <taxon>Bacillati</taxon>
        <taxon>Actinomycetota</taxon>
        <taxon>Actinomycetes</taxon>
        <taxon>Propionibacteriales</taxon>
        <taxon>Nocardioidaceae</taxon>
        <taxon>Nocardioides</taxon>
    </lineage>
</organism>
<name>SYM_NOCSJ</name>
<feature type="chain" id="PRO_0000331858" description="Methionine--tRNA ligase">
    <location>
        <begin position="1"/>
        <end position="595"/>
    </location>
</feature>
<feature type="short sequence motif" description="'HIGH' region">
    <location>
        <begin position="11"/>
        <end position="21"/>
    </location>
</feature>
<feature type="short sequence motif" description="'KMSKS' region">
    <location>
        <begin position="350"/>
        <end position="354"/>
    </location>
</feature>
<feature type="binding site" evidence="1">
    <location>
        <position position="143"/>
    </location>
    <ligand>
        <name>Zn(2+)</name>
        <dbReference type="ChEBI" id="CHEBI:29105"/>
    </ligand>
</feature>
<feature type="binding site" evidence="1">
    <location>
        <position position="146"/>
    </location>
    <ligand>
        <name>Zn(2+)</name>
        <dbReference type="ChEBI" id="CHEBI:29105"/>
    </ligand>
</feature>
<feature type="binding site" evidence="1">
    <location>
        <position position="156"/>
    </location>
    <ligand>
        <name>Zn(2+)</name>
        <dbReference type="ChEBI" id="CHEBI:29105"/>
    </ligand>
</feature>
<feature type="binding site" evidence="1">
    <location>
        <position position="159"/>
    </location>
    <ligand>
        <name>Zn(2+)</name>
        <dbReference type="ChEBI" id="CHEBI:29105"/>
    </ligand>
</feature>
<feature type="binding site" evidence="1">
    <location>
        <position position="353"/>
    </location>
    <ligand>
        <name>ATP</name>
        <dbReference type="ChEBI" id="CHEBI:30616"/>
    </ligand>
</feature>
<accession>A1SGG5</accession>
<dbReference type="EC" id="6.1.1.10" evidence="1"/>
<dbReference type="EMBL" id="CP000509">
    <property type="protein sequence ID" value="ABL80900.1"/>
    <property type="molecule type" value="Genomic_DNA"/>
</dbReference>
<dbReference type="RefSeq" id="WP_011754848.1">
    <property type="nucleotide sequence ID" value="NC_008699.1"/>
</dbReference>
<dbReference type="SMR" id="A1SGG5"/>
<dbReference type="STRING" id="196162.Noca_1386"/>
<dbReference type="KEGG" id="nca:Noca_1386"/>
<dbReference type="eggNOG" id="COG0143">
    <property type="taxonomic scope" value="Bacteria"/>
</dbReference>
<dbReference type="HOGENOM" id="CLU_009710_1_2_11"/>
<dbReference type="OrthoDB" id="9810191at2"/>
<dbReference type="Proteomes" id="UP000000640">
    <property type="component" value="Chromosome"/>
</dbReference>
<dbReference type="GO" id="GO:0005829">
    <property type="term" value="C:cytosol"/>
    <property type="evidence" value="ECO:0007669"/>
    <property type="project" value="TreeGrafter"/>
</dbReference>
<dbReference type="GO" id="GO:0005524">
    <property type="term" value="F:ATP binding"/>
    <property type="evidence" value="ECO:0007669"/>
    <property type="project" value="UniProtKB-UniRule"/>
</dbReference>
<dbReference type="GO" id="GO:0046872">
    <property type="term" value="F:metal ion binding"/>
    <property type="evidence" value="ECO:0007669"/>
    <property type="project" value="UniProtKB-KW"/>
</dbReference>
<dbReference type="GO" id="GO:0004825">
    <property type="term" value="F:methionine-tRNA ligase activity"/>
    <property type="evidence" value="ECO:0007669"/>
    <property type="project" value="UniProtKB-UniRule"/>
</dbReference>
<dbReference type="GO" id="GO:0006431">
    <property type="term" value="P:methionyl-tRNA aminoacylation"/>
    <property type="evidence" value="ECO:0007669"/>
    <property type="project" value="UniProtKB-UniRule"/>
</dbReference>
<dbReference type="CDD" id="cd07957">
    <property type="entry name" value="Anticodon_Ia_Met"/>
    <property type="match status" value="1"/>
</dbReference>
<dbReference type="CDD" id="cd00814">
    <property type="entry name" value="MetRS_core"/>
    <property type="match status" value="1"/>
</dbReference>
<dbReference type="FunFam" id="2.20.28.20:FF:000001">
    <property type="entry name" value="Methionine--tRNA ligase"/>
    <property type="match status" value="1"/>
</dbReference>
<dbReference type="Gene3D" id="3.40.50.620">
    <property type="entry name" value="HUPs"/>
    <property type="match status" value="1"/>
</dbReference>
<dbReference type="Gene3D" id="1.10.730.10">
    <property type="entry name" value="Isoleucyl-tRNA Synthetase, Domain 1"/>
    <property type="match status" value="1"/>
</dbReference>
<dbReference type="Gene3D" id="2.20.28.20">
    <property type="entry name" value="Methionyl-tRNA synthetase, Zn-domain"/>
    <property type="match status" value="1"/>
</dbReference>
<dbReference type="HAMAP" id="MF_00098">
    <property type="entry name" value="Met_tRNA_synth_type1"/>
    <property type="match status" value="1"/>
</dbReference>
<dbReference type="InterPro" id="IPR041872">
    <property type="entry name" value="Anticodon_Met"/>
</dbReference>
<dbReference type="InterPro" id="IPR023458">
    <property type="entry name" value="Met-tRNA_ligase_1"/>
</dbReference>
<dbReference type="InterPro" id="IPR014758">
    <property type="entry name" value="Met-tRNA_synth"/>
</dbReference>
<dbReference type="InterPro" id="IPR015413">
    <property type="entry name" value="Methionyl/Leucyl_tRNA_Synth"/>
</dbReference>
<dbReference type="InterPro" id="IPR033911">
    <property type="entry name" value="MetRS_core"/>
</dbReference>
<dbReference type="InterPro" id="IPR029038">
    <property type="entry name" value="MetRS_Zn"/>
</dbReference>
<dbReference type="InterPro" id="IPR014729">
    <property type="entry name" value="Rossmann-like_a/b/a_fold"/>
</dbReference>
<dbReference type="InterPro" id="IPR009080">
    <property type="entry name" value="tRNAsynth_Ia_anticodon-bd"/>
</dbReference>
<dbReference type="NCBIfam" id="TIGR00398">
    <property type="entry name" value="metG"/>
    <property type="match status" value="1"/>
</dbReference>
<dbReference type="PANTHER" id="PTHR45765">
    <property type="entry name" value="METHIONINE--TRNA LIGASE"/>
    <property type="match status" value="1"/>
</dbReference>
<dbReference type="PANTHER" id="PTHR45765:SF1">
    <property type="entry name" value="METHIONINE--TRNA LIGASE, CYTOPLASMIC"/>
    <property type="match status" value="1"/>
</dbReference>
<dbReference type="Pfam" id="PF19303">
    <property type="entry name" value="Anticodon_3"/>
    <property type="match status" value="1"/>
</dbReference>
<dbReference type="Pfam" id="PF09334">
    <property type="entry name" value="tRNA-synt_1g"/>
    <property type="match status" value="1"/>
</dbReference>
<dbReference type="PRINTS" id="PR01041">
    <property type="entry name" value="TRNASYNTHMET"/>
</dbReference>
<dbReference type="SUPFAM" id="SSF47323">
    <property type="entry name" value="Anticodon-binding domain of a subclass of class I aminoacyl-tRNA synthetases"/>
    <property type="match status" value="1"/>
</dbReference>
<dbReference type="SUPFAM" id="SSF57770">
    <property type="entry name" value="Methionyl-tRNA synthetase (MetRS), Zn-domain"/>
    <property type="match status" value="1"/>
</dbReference>
<dbReference type="SUPFAM" id="SSF52374">
    <property type="entry name" value="Nucleotidylyl transferase"/>
    <property type="match status" value="1"/>
</dbReference>
<proteinExistence type="inferred from homology"/>
<gene>
    <name evidence="1" type="primary">metG</name>
    <name type="ordered locus">Noca_1386</name>
</gene>
<keyword id="KW-0030">Aminoacyl-tRNA synthetase</keyword>
<keyword id="KW-0067">ATP-binding</keyword>
<keyword id="KW-0963">Cytoplasm</keyword>
<keyword id="KW-0436">Ligase</keyword>
<keyword id="KW-0479">Metal-binding</keyword>
<keyword id="KW-0547">Nucleotide-binding</keyword>
<keyword id="KW-0648">Protein biosynthesis</keyword>
<keyword id="KW-1185">Reference proteome</keyword>
<keyword id="KW-0862">Zinc</keyword>
<comment type="function">
    <text evidence="1">Is required not only for elongation of protein synthesis but also for the initiation of all mRNA translation through initiator tRNA(fMet) aminoacylation.</text>
</comment>
<comment type="catalytic activity">
    <reaction evidence="1">
        <text>tRNA(Met) + L-methionine + ATP = L-methionyl-tRNA(Met) + AMP + diphosphate</text>
        <dbReference type="Rhea" id="RHEA:13481"/>
        <dbReference type="Rhea" id="RHEA-COMP:9667"/>
        <dbReference type="Rhea" id="RHEA-COMP:9698"/>
        <dbReference type="ChEBI" id="CHEBI:30616"/>
        <dbReference type="ChEBI" id="CHEBI:33019"/>
        <dbReference type="ChEBI" id="CHEBI:57844"/>
        <dbReference type="ChEBI" id="CHEBI:78442"/>
        <dbReference type="ChEBI" id="CHEBI:78530"/>
        <dbReference type="ChEBI" id="CHEBI:456215"/>
        <dbReference type="EC" id="6.1.1.10"/>
    </reaction>
</comment>
<comment type="cofactor">
    <cofactor evidence="1">
        <name>Zn(2+)</name>
        <dbReference type="ChEBI" id="CHEBI:29105"/>
    </cofactor>
    <text evidence="1">Binds 1 zinc ion per subunit.</text>
</comment>
<comment type="subunit">
    <text evidence="1">Monomer.</text>
</comment>
<comment type="subcellular location">
    <subcellularLocation>
        <location evidence="1">Cytoplasm</location>
    </subcellularLocation>
</comment>
<comment type="similarity">
    <text evidence="1">Belongs to the class-I aminoacyl-tRNA synthetase family. MetG type 1 subfamily.</text>
</comment>
<reference key="1">
    <citation type="submission" date="2006-12" db="EMBL/GenBank/DDBJ databases">
        <title>Complete sequence of chromosome 1 of Nocardioides sp. JS614.</title>
        <authorList>
            <person name="Copeland A."/>
            <person name="Lucas S."/>
            <person name="Lapidus A."/>
            <person name="Barry K."/>
            <person name="Detter J.C."/>
            <person name="Glavina del Rio T."/>
            <person name="Hammon N."/>
            <person name="Israni S."/>
            <person name="Dalin E."/>
            <person name="Tice H."/>
            <person name="Pitluck S."/>
            <person name="Thompson L.S."/>
            <person name="Brettin T."/>
            <person name="Bruce D."/>
            <person name="Han C."/>
            <person name="Tapia R."/>
            <person name="Schmutz J."/>
            <person name="Larimer F."/>
            <person name="Land M."/>
            <person name="Hauser L."/>
            <person name="Kyrpides N."/>
            <person name="Kim E."/>
            <person name="Mattes T."/>
            <person name="Gossett J."/>
            <person name="Richardson P."/>
        </authorList>
    </citation>
    <scope>NUCLEOTIDE SEQUENCE [LARGE SCALE GENOMIC DNA]</scope>
    <source>
        <strain>ATCC BAA-499 / JS614</strain>
    </source>
</reference>
<evidence type="ECO:0000255" key="1">
    <source>
        <dbReference type="HAMAP-Rule" id="MF_00098"/>
    </source>
</evidence>